<reference key="1">
    <citation type="journal article" date="2001" name="Science">
        <title>The genome of the natural genetic engineer Agrobacterium tumefaciens C58.</title>
        <authorList>
            <person name="Wood D.W."/>
            <person name="Setubal J.C."/>
            <person name="Kaul R."/>
            <person name="Monks D.E."/>
            <person name="Kitajima J.P."/>
            <person name="Okura V.K."/>
            <person name="Zhou Y."/>
            <person name="Chen L."/>
            <person name="Wood G.E."/>
            <person name="Almeida N.F. Jr."/>
            <person name="Woo L."/>
            <person name="Chen Y."/>
            <person name="Paulsen I.T."/>
            <person name="Eisen J.A."/>
            <person name="Karp P.D."/>
            <person name="Bovee D. Sr."/>
            <person name="Chapman P."/>
            <person name="Clendenning J."/>
            <person name="Deatherage G."/>
            <person name="Gillet W."/>
            <person name="Grant C."/>
            <person name="Kutyavin T."/>
            <person name="Levy R."/>
            <person name="Li M.-J."/>
            <person name="McClelland E."/>
            <person name="Palmieri A."/>
            <person name="Raymond C."/>
            <person name="Rouse G."/>
            <person name="Saenphimmachak C."/>
            <person name="Wu Z."/>
            <person name="Romero P."/>
            <person name="Gordon D."/>
            <person name="Zhang S."/>
            <person name="Yoo H."/>
            <person name="Tao Y."/>
            <person name="Biddle P."/>
            <person name="Jung M."/>
            <person name="Krespan W."/>
            <person name="Perry M."/>
            <person name="Gordon-Kamm B."/>
            <person name="Liao L."/>
            <person name="Kim S."/>
            <person name="Hendrick C."/>
            <person name="Zhao Z.-Y."/>
            <person name="Dolan M."/>
            <person name="Chumley F."/>
            <person name="Tingey S.V."/>
            <person name="Tomb J.-F."/>
            <person name="Gordon M.P."/>
            <person name="Olson M.V."/>
            <person name="Nester E.W."/>
        </authorList>
    </citation>
    <scope>NUCLEOTIDE SEQUENCE [LARGE SCALE GENOMIC DNA]</scope>
    <source>
        <strain>C58 / ATCC 33970</strain>
    </source>
</reference>
<reference key="2">
    <citation type="journal article" date="2001" name="Science">
        <title>Genome sequence of the plant pathogen and biotechnology agent Agrobacterium tumefaciens C58.</title>
        <authorList>
            <person name="Goodner B."/>
            <person name="Hinkle G."/>
            <person name="Gattung S."/>
            <person name="Miller N."/>
            <person name="Blanchard M."/>
            <person name="Qurollo B."/>
            <person name="Goldman B.S."/>
            <person name="Cao Y."/>
            <person name="Askenazi M."/>
            <person name="Halling C."/>
            <person name="Mullin L."/>
            <person name="Houmiel K."/>
            <person name="Gordon J."/>
            <person name="Vaudin M."/>
            <person name="Iartchouk O."/>
            <person name="Epp A."/>
            <person name="Liu F."/>
            <person name="Wollam C."/>
            <person name="Allinger M."/>
            <person name="Doughty D."/>
            <person name="Scott C."/>
            <person name="Lappas C."/>
            <person name="Markelz B."/>
            <person name="Flanagan C."/>
            <person name="Crowell C."/>
            <person name="Gurson J."/>
            <person name="Lomo C."/>
            <person name="Sear C."/>
            <person name="Strub G."/>
            <person name="Cielo C."/>
            <person name="Slater S."/>
        </authorList>
    </citation>
    <scope>NUCLEOTIDE SEQUENCE [LARGE SCALE GENOMIC DNA]</scope>
    <source>
        <strain>C58 / ATCC 33970</strain>
    </source>
</reference>
<comment type="function">
    <text evidence="1">Catalyzes the conversion of uracil and 5-phospho-alpha-D-ribose 1-diphosphate (PRPP) to UMP and diphosphate.</text>
</comment>
<comment type="catalytic activity">
    <reaction evidence="1">
        <text>UMP + diphosphate = 5-phospho-alpha-D-ribose 1-diphosphate + uracil</text>
        <dbReference type="Rhea" id="RHEA:13017"/>
        <dbReference type="ChEBI" id="CHEBI:17568"/>
        <dbReference type="ChEBI" id="CHEBI:33019"/>
        <dbReference type="ChEBI" id="CHEBI:57865"/>
        <dbReference type="ChEBI" id="CHEBI:58017"/>
        <dbReference type="EC" id="2.4.2.9"/>
    </reaction>
</comment>
<comment type="cofactor">
    <cofactor evidence="1">
        <name>Mg(2+)</name>
        <dbReference type="ChEBI" id="CHEBI:18420"/>
    </cofactor>
    <text evidence="1">Binds 1 Mg(2+) ion per subunit. The magnesium is bound as Mg-PRPP.</text>
</comment>
<comment type="activity regulation">
    <text evidence="1">Allosterically activated by GTP.</text>
</comment>
<comment type="pathway">
    <text evidence="1">Pyrimidine metabolism; UMP biosynthesis via salvage pathway; UMP from uracil: step 1/1.</text>
</comment>
<comment type="similarity">
    <text evidence="1">Belongs to the UPRTase family.</text>
</comment>
<proteinExistence type="inferred from homology"/>
<accession>Q8UJ06</accession>
<evidence type="ECO:0000255" key="1">
    <source>
        <dbReference type="HAMAP-Rule" id="MF_01218"/>
    </source>
</evidence>
<feature type="chain" id="PRO_0000120790" description="Uracil phosphoribosyltransferase">
    <location>
        <begin position="1"/>
        <end position="209"/>
    </location>
</feature>
<feature type="binding site" evidence="1">
    <location>
        <position position="79"/>
    </location>
    <ligand>
        <name>5-phospho-alpha-D-ribose 1-diphosphate</name>
        <dbReference type="ChEBI" id="CHEBI:58017"/>
    </ligand>
</feature>
<feature type="binding site" evidence="1">
    <location>
        <position position="104"/>
    </location>
    <ligand>
        <name>5-phospho-alpha-D-ribose 1-diphosphate</name>
        <dbReference type="ChEBI" id="CHEBI:58017"/>
    </ligand>
</feature>
<feature type="binding site" evidence="1">
    <location>
        <begin position="131"/>
        <end position="139"/>
    </location>
    <ligand>
        <name>5-phospho-alpha-D-ribose 1-diphosphate</name>
        <dbReference type="ChEBI" id="CHEBI:58017"/>
    </ligand>
</feature>
<feature type="binding site" evidence="1">
    <location>
        <position position="194"/>
    </location>
    <ligand>
        <name>uracil</name>
        <dbReference type="ChEBI" id="CHEBI:17568"/>
    </ligand>
</feature>
<feature type="binding site" evidence="1">
    <location>
        <begin position="199"/>
        <end position="201"/>
    </location>
    <ligand>
        <name>uracil</name>
        <dbReference type="ChEBI" id="CHEBI:17568"/>
    </ligand>
</feature>
<feature type="binding site" evidence="1">
    <location>
        <position position="200"/>
    </location>
    <ligand>
        <name>5-phospho-alpha-D-ribose 1-diphosphate</name>
        <dbReference type="ChEBI" id="CHEBI:58017"/>
    </ligand>
</feature>
<gene>
    <name evidence="1" type="primary">upp</name>
    <name type="ordered locus">Atu0135</name>
    <name type="ORF">AGR_C_216</name>
</gene>
<name>UPP_AGRFC</name>
<protein>
    <recommendedName>
        <fullName evidence="1">Uracil phosphoribosyltransferase</fullName>
        <ecNumber evidence="1">2.4.2.9</ecNumber>
    </recommendedName>
    <alternativeName>
        <fullName evidence="1">UMP pyrophosphorylase</fullName>
    </alternativeName>
    <alternativeName>
        <fullName evidence="1">UPRTase</fullName>
    </alternativeName>
</protein>
<sequence length="209" mass="23201">MDGVTVIEHPLVRHKLTIMRKKETSTAGFRRLLREISTLLCYEVTRDLEMTMETIDTPLETIQAPVLEGKKLVFASILRAGNGLLEGMLELVPSARVAHVGVYRDHDTLEAVEYYFKAPESLDARLVIVVDPMLATGNSSIAAVEKLKERGAKNIRFLCLLAAPEGIKNFREAHPDVPIYTAAIDRHLNEKGYIVPGLGDAGDRMYGTK</sequence>
<dbReference type="EC" id="2.4.2.9" evidence="1"/>
<dbReference type="EMBL" id="AE007869">
    <property type="protein sequence ID" value="AAK85956.1"/>
    <property type="molecule type" value="Genomic_DNA"/>
</dbReference>
<dbReference type="PIR" id="AI2592">
    <property type="entry name" value="AI2592"/>
</dbReference>
<dbReference type="PIR" id="C97375">
    <property type="entry name" value="C97375"/>
</dbReference>
<dbReference type="RefSeq" id="NP_353171.1">
    <property type="nucleotide sequence ID" value="NC_003062.2"/>
</dbReference>
<dbReference type="RefSeq" id="WP_004439188.1">
    <property type="nucleotide sequence ID" value="NC_003062.2"/>
</dbReference>
<dbReference type="SMR" id="Q8UJ06"/>
<dbReference type="STRING" id="176299.Atu0135"/>
<dbReference type="EnsemblBacteria" id="AAK85956">
    <property type="protein sequence ID" value="AAK85956"/>
    <property type="gene ID" value="Atu0135"/>
</dbReference>
<dbReference type="GeneID" id="79861628"/>
<dbReference type="KEGG" id="atu:Atu0135"/>
<dbReference type="PATRIC" id="fig|176299.10.peg.126"/>
<dbReference type="eggNOG" id="COG0035">
    <property type="taxonomic scope" value="Bacteria"/>
</dbReference>
<dbReference type="HOGENOM" id="CLU_067096_2_2_5"/>
<dbReference type="OrthoDB" id="9781675at2"/>
<dbReference type="PhylomeDB" id="Q8UJ06"/>
<dbReference type="BioCyc" id="AGRO:ATU0135-MONOMER"/>
<dbReference type="UniPathway" id="UPA00574">
    <property type="reaction ID" value="UER00636"/>
</dbReference>
<dbReference type="Proteomes" id="UP000000813">
    <property type="component" value="Chromosome circular"/>
</dbReference>
<dbReference type="GO" id="GO:0005525">
    <property type="term" value="F:GTP binding"/>
    <property type="evidence" value="ECO:0007669"/>
    <property type="project" value="UniProtKB-KW"/>
</dbReference>
<dbReference type="GO" id="GO:0000287">
    <property type="term" value="F:magnesium ion binding"/>
    <property type="evidence" value="ECO:0007669"/>
    <property type="project" value="UniProtKB-UniRule"/>
</dbReference>
<dbReference type="GO" id="GO:0004845">
    <property type="term" value="F:uracil phosphoribosyltransferase activity"/>
    <property type="evidence" value="ECO:0007669"/>
    <property type="project" value="UniProtKB-UniRule"/>
</dbReference>
<dbReference type="GO" id="GO:0044206">
    <property type="term" value="P:UMP salvage"/>
    <property type="evidence" value="ECO:0007669"/>
    <property type="project" value="UniProtKB-UniRule"/>
</dbReference>
<dbReference type="GO" id="GO:0006223">
    <property type="term" value="P:uracil salvage"/>
    <property type="evidence" value="ECO:0007669"/>
    <property type="project" value="InterPro"/>
</dbReference>
<dbReference type="CDD" id="cd06223">
    <property type="entry name" value="PRTases_typeI"/>
    <property type="match status" value="1"/>
</dbReference>
<dbReference type="FunFam" id="3.40.50.2020:FF:000003">
    <property type="entry name" value="Uracil phosphoribosyltransferase"/>
    <property type="match status" value="1"/>
</dbReference>
<dbReference type="Gene3D" id="3.40.50.2020">
    <property type="match status" value="1"/>
</dbReference>
<dbReference type="HAMAP" id="MF_01218_B">
    <property type="entry name" value="Upp_B"/>
    <property type="match status" value="1"/>
</dbReference>
<dbReference type="InterPro" id="IPR000836">
    <property type="entry name" value="PRibTrfase_dom"/>
</dbReference>
<dbReference type="InterPro" id="IPR029057">
    <property type="entry name" value="PRTase-like"/>
</dbReference>
<dbReference type="InterPro" id="IPR034332">
    <property type="entry name" value="Upp_B"/>
</dbReference>
<dbReference type="InterPro" id="IPR050054">
    <property type="entry name" value="UPRTase/APRTase"/>
</dbReference>
<dbReference type="InterPro" id="IPR005765">
    <property type="entry name" value="Ura_phspho_trans"/>
</dbReference>
<dbReference type="NCBIfam" id="NF001097">
    <property type="entry name" value="PRK00129.1"/>
    <property type="match status" value="1"/>
</dbReference>
<dbReference type="NCBIfam" id="TIGR01091">
    <property type="entry name" value="upp"/>
    <property type="match status" value="1"/>
</dbReference>
<dbReference type="PANTHER" id="PTHR32315">
    <property type="entry name" value="ADENINE PHOSPHORIBOSYLTRANSFERASE"/>
    <property type="match status" value="1"/>
</dbReference>
<dbReference type="PANTHER" id="PTHR32315:SF4">
    <property type="entry name" value="URACIL PHOSPHORIBOSYLTRANSFERASE, CHLOROPLASTIC"/>
    <property type="match status" value="1"/>
</dbReference>
<dbReference type="Pfam" id="PF14681">
    <property type="entry name" value="UPRTase"/>
    <property type="match status" value="1"/>
</dbReference>
<dbReference type="SUPFAM" id="SSF53271">
    <property type="entry name" value="PRTase-like"/>
    <property type="match status" value="1"/>
</dbReference>
<organism>
    <name type="scientific">Agrobacterium fabrum (strain C58 / ATCC 33970)</name>
    <name type="common">Agrobacterium tumefaciens (strain C58)</name>
    <dbReference type="NCBI Taxonomy" id="176299"/>
    <lineage>
        <taxon>Bacteria</taxon>
        <taxon>Pseudomonadati</taxon>
        <taxon>Pseudomonadota</taxon>
        <taxon>Alphaproteobacteria</taxon>
        <taxon>Hyphomicrobiales</taxon>
        <taxon>Rhizobiaceae</taxon>
        <taxon>Rhizobium/Agrobacterium group</taxon>
        <taxon>Agrobacterium</taxon>
        <taxon>Agrobacterium tumefaciens complex</taxon>
    </lineage>
</organism>
<keyword id="KW-0021">Allosteric enzyme</keyword>
<keyword id="KW-0328">Glycosyltransferase</keyword>
<keyword id="KW-0342">GTP-binding</keyword>
<keyword id="KW-0460">Magnesium</keyword>
<keyword id="KW-0547">Nucleotide-binding</keyword>
<keyword id="KW-1185">Reference proteome</keyword>
<keyword id="KW-0808">Transferase</keyword>